<name>ACKR1_HUMAN</name>
<reference key="1">
    <citation type="journal article" date="1993" name="Proc. Natl. Acad. Sci. U.S.A.">
        <title>Cloning of glycoprotein D cDNA, which encodes the major subunit of the Duffy blood group system and the receptor for the Plasmodium vivax malaria parasite.</title>
        <authorList>
            <person name="Chaudhuri A."/>
            <person name="Polyakova J."/>
            <person name="Zbrzezna V."/>
            <person name="Williams K."/>
            <person name="Gulati S."/>
            <person name="Pogo A."/>
        </authorList>
    </citation>
    <scope>NUCLEOTIDE SEQUENCE [MRNA] (ISOFORM 1)</scope>
    <scope>PARTIAL PROTEIN SEQUENCE</scope>
    <scope>VARIANT ASP-42</scope>
    <source>
        <tissue>Bone marrow</tissue>
    </source>
</reference>
<reference key="2">
    <citation type="journal article" date="1995" name="Nat. Genet.">
        <title>Disruption of a GATA motif in the Duffy gene promoter abolishes erythroid gene expression in Duffy-negative individuals.</title>
        <authorList>
            <person name="Tournamille C."/>
            <person name="Colin Y."/>
            <person name="Cartron J.-P."/>
            <person name="Le van Kim C."/>
        </authorList>
    </citation>
    <scope>NUCLEOTIDE SEQUENCE [GENOMIC DNA]</scope>
    <scope>VARIANT ASP-42</scope>
    <source>
        <tissue>Blood</tissue>
    </source>
</reference>
<reference key="3">
    <citation type="journal article" date="1995" name="Blood">
        <title>Genomic organization of the glycoprotein D gene: Duffy blood group Fya/Fyb alloantigen system is associated with a polymorphism at the 44-amino acid residue.</title>
        <authorList>
            <person name="Iwamoto S."/>
            <person name="Omi T."/>
            <person name="Kajii E."/>
            <person name="Ikemoto S."/>
        </authorList>
    </citation>
    <scope>NUCLEOTIDE SEQUENCE [GENOMIC DNA]</scope>
    <source>
        <tissue>Blood</tissue>
    </source>
</reference>
<reference key="4">
    <citation type="journal article" date="1998" name="Blood">
        <title>Arg89Cys substitution results in very low membrane expression of the Duffy antigen/receptor for chemokines in Fy(x) individuals.</title>
        <authorList>
            <person name="Tournamille C."/>
            <person name="Le Van Kim C."/>
            <person name="Gane P."/>
            <person name="Le Pennec P.Y."/>
            <person name="Roubinet F."/>
            <person name="Babinet J."/>
            <person name="Cartron J.-P."/>
            <person name="Colin Y."/>
        </authorList>
    </citation>
    <scope>NUCLEOTIDE SEQUENCE [GENOMIC DNA] (ISOFORM 2)</scope>
    <scope>VARIANTS ASP-42; CYS-89 AND THR-100</scope>
    <source>
        <tissue>Blood</tissue>
    </source>
</reference>
<reference key="5">
    <citation type="journal article" date="1998" name="Br. J. Haematol.">
        <title>The Fy(x) phenotype is associated with a missense mutation in the Fy(b) allele predicting Arg89Cys in the Duffy glycoprotein.</title>
        <authorList>
            <person name="Olsson M.L."/>
            <person name="Smythe J.S."/>
            <person name="Hansson C."/>
            <person name="Poole J."/>
            <person name="Mallinson G."/>
            <person name="Jones J."/>
            <person name="Avent N.D."/>
            <person name="Daniels G."/>
        </authorList>
    </citation>
    <scope>NUCLEOTIDE SEQUENCE [MRNA] (ISOFORM 1)</scope>
    <scope>VARIANTS ASP-42; CYS-89 AND THR-100</scope>
</reference>
<reference key="6">
    <citation type="submission" date="2007-09" db="EMBL/GenBank/DDBJ databases">
        <title>New polymorphisms in DARC.</title>
        <authorList>
            <person name="Doescher A."/>
        </authorList>
    </citation>
    <scope>NUCLEOTIDE SEQUENCE [GENOMIC DNA]</scope>
    <scope>VARIANT PHE-326</scope>
    <source>
        <tissue>Peripheral blood</tissue>
    </source>
</reference>
<reference key="7">
    <citation type="journal article" date="2006" name="Nature">
        <title>The DNA sequence and biological annotation of human chromosome 1.</title>
        <authorList>
            <person name="Gregory S.G."/>
            <person name="Barlow K.F."/>
            <person name="McLay K.E."/>
            <person name="Kaul R."/>
            <person name="Swarbreck D."/>
            <person name="Dunham A."/>
            <person name="Scott C.E."/>
            <person name="Howe K.L."/>
            <person name="Woodfine K."/>
            <person name="Spencer C.C.A."/>
            <person name="Jones M.C."/>
            <person name="Gillson C."/>
            <person name="Searle S."/>
            <person name="Zhou Y."/>
            <person name="Kokocinski F."/>
            <person name="McDonald L."/>
            <person name="Evans R."/>
            <person name="Phillips K."/>
            <person name="Atkinson A."/>
            <person name="Cooper R."/>
            <person name="Jones C."/>
            <person name="Hall R.E."/>
            <person name="Andrews T.D."/>
            <person name="Lloyd C."/>
            <person name="Ainscough R."/>
            <person name="Almeida J.P."/>
            <person name="Ambrose K.D."/>
            <person name="Anderson F."/>
            <person name="Andrew R.W."/>
            <person name="Ashwell R.I.S."/>
            <person name="Aubin K."/>
            <person name="Babbage A.K."/>
            <person name="Bagguley C.L."/>
            <person name="Bailey J."/>
            <person name="Beasley H."/>
            <person name="Bethel G."/>
            <person name="Bird C.P."/>
            <person name="Bray-Allen S."/>
            <person name="Brown J.Y."/>
            <person name="Brown A.J."/>
            <person name="Buckley D."/>
            <person name="Burton J."/>
            <person name="Bye J."/>
            <person name="Carder C."/>
            <person name="Chapman J.C."/>
            <person name="Clark S.Y."/>
            <person name="Clarke G."/>
            <person name="Clee C."/>
            <person name="Cobley V."/>
            <person name="Collier R.E."/>
            <person name="Corby N."/>
            <person name="Coville G.J."/>
            <person name="Davies J."/>
            <person name="Deadman R."/>
            <person name="Dunn M."/>
            <person name="Earthrowl M."/>
            <person name="Ellington A.G."/>
            <person name="Errington H."/>
            <person name="Frankish A."/>
            <person name="Frankland J."/>
            <person name="French L."/>
            <person name="Garner P."/>
            <person name="Garnett J."/>
            <person name="Gay L."/>
            <person name="Ghori M.R.J."/>
            <person name="Gibson R."/>
            <person name="Gilby L.M."/>
            <person name="Gillett W."/>
            <person name="Glithero R.J."/>
            <person name="Grafham D.V."/>
            <person name="Griffiths C."/>
            <person name="Griffiths-Jones S."/>
            <person name="Grocock R."/>
            <person name="Hammond S."/>
            <person name="Harrison E.S.I."/>
            <person name="Hart E."/>
            <person name="Haugen E."/>
            <person name="Heath P.D."/>
            <person name="Holmes S."/>
            <person name="Holt K."/>
            <person name="Howden P.J."/>
            <person name="Hunt A.R."/>
            <person name="Hunt S.E."/>
            <person name="Hunter G."/>
            <person name="Isherwood J."/>
            <person name="James R."/>
            <person name="Johnson C."/>
            <person name="Johnson D."/>
            <person name="Joy A."/>
            <person name="Kay M."/>
            <person name="Kershaw J.K."/>
            <person name="Kibukawa M."/>
            <person name="Kimberley A.M."/>
            <person name="King A."/>
            <person name="Knights A.J."/>
            <person name="Lad H."/>
            <person name="Laird G."/>
            <person name="Lawlor S."/>
            <person name="Leongamornlert D.A."/>
            <person name="Lloyd D.M."/>
            <person name="Loveland J."/>
            <person name="Lovell J."/>
            <person name="Lush M.J."/>
            <person name="Lyne R."/>
            <person name="Martin S."/>
            <person name="Mashreghi-Mohammadi M."/>
            <person name="Matthews L."/>
            <person name="Matthews N.S.W."/>
            <person name="McLaren S."/>
            <person name="Milne S."/>
            <person name="Mistry S."/>
            <person name="Moore M.J.F."/>
            <person name="Nickerson T."/>
            <person name="O'Dell C.N."/>
            <person name="Oliver K."/>
            <person name="Palmeiri A."/>
            <person name="Palmer S.A."/>
            <person name="Parker A."/>
            <person name="Patel D."/>
            <person name="Pearce A.V."/>
            <person name="Peck A.I."/>
            <person name="Pelan S."/>
            <person name="Phelps K."/>
            <person name="Phillimore B.J."/>
            <person name="Plumb R."/>
            <person name="Rajan J."/>
            <person name="Raymond C."/>
            <person name="Rouse G."/>
            <person name="Saenphimmachak C."/>
            <person name="Sehra H.K."/>
            <person name="Sheridan E."/>
            <person name="Shownkeen R."/>
            <person name="Sims S."/>
            <person name="Skuce C.D."/>
            <person name="Smith M."/>
            <person name="Steward C."/>
            <person name="Subramanian S."/>
            <person name="Sycamore N."/>
            <person name="Tracey A."/>
            <person name="Tromans A."/>
            <person name="Van Helmond Z."/>
            <person name="Wall M."/>
            <person name="Wallis J.M."/>
            <person name="White S."/>
            <person name="Whitehead S.L."/>
            <person name="Wilkinson J.E."/>
            <person name="Willey D.L."/>
            <person name="Williams H."/>
            <person name="Wilming L."/>
            <person name="Wray P.W."/>
            <person name="Wu Z."/>
            <person name="Coulson A."/>
            <person name="Vaudin M."/>
            <person name="Sulston J.E."/>
            <person name="Durbin R.M."/>
            <person name="Hubbard T."/>
            <person name="Wooster R."/>
            <person name="Dunham I."/>
            <person name="Carter N.P."/>
            <person name="McVean G."/>
            <person name="Ross M.T."/>
            <person name="Harrow J."/>
            <person name="Olson M.V."/>
            <person name="Beck S."/>
            <person name="Rogers J."/>
            <person name="Bentley D.R."/>
        </authorList>
    </citation>
    <scope>NUCLEOTIDE SEQUENCE [LARGE SCALE GENOMIC DNA]</scope>
</reference>
<reference key="8">
    <citation type="journal article" date="2004" name="Genome Res.">
        <title>The status, quality, and expansion of the NIH full-length cDNA project: the Mammalian Gene Collection (MGC).</title>
        <authorList>
            <consortium name="The MGC Project Team"/>
        </authorList>
    </citation>
    <scope>NUCLEOTIDE SEQUENCE [LARGE SCALE MRNA] (ISOFORM 2)</scope>
    <scope>VARIANT PHE-326</scope>
    <source>
        <tissue>Lung</tissue>
    </source>
</reference>
<reference key="9">
    <citation type="journal article" date="1999" name="Proc. Natl. Acad. Sci. U.S.A.">
        <title>Emergence of FY*A(null) in a Plasmodium vivax-endemic region of Papua New Guinea.</title>
        <authorList>
            <person name="Zimmerman P.A."/>
            <person name="Woolley I."/>
            <person name="Masinde G.L."/>
            <person name="Miller S.M."/>
            <person name="McNamara D.T."/>
            <person name="Hazlett F."/>
            <person name="Mgone C.S."/>
            <person name="Alpers M.P."/>
            <person name="Genton B."/>
            <person name="Boatin B.A."/>
            <person name="Kazura J.W."/>
        </authorList>
    </citation>
    <scope>NUCLEOTIDE SEQUENCE [GENOMIC DNA] OF 1-117 (ISOFORMS 1 AND 2)</scope>
</reference>
<reference key="10">
    <citation type="journal article" date="1996" name="J. Exp. Med.">
        <title>The domain on the Duffy blood group antigen for binding Plasmodium vivax and P. knowlesi malarial parasites to erythrocytes.</title>
        <authorList>
            <person name="Chitnis C.E."/>
            <person name="Chaudhuri A."/>
            <person name="Horuk R."/>
            <person name="Pogo A.O."/>
            <person name="Miller L.H."/>
        </authorList>
    </citation>
    <scope>INTERACTION WITH PLASMODIUM DBPALPHA AND PVDR (MICROBIAL INFECTION)</scope>
</reference>
<reference key="11">
    <citation type="journal article" date="2001" name="J. Biol. Chem.">
        <title>Biochemical, biophysical, and functional characterization of bacterially expressed and refolded receptor binding domain of Plasmodium vivax duffy-binding protein.</title>
        <authorList>
            <person name="Singh S."/>
            <person name="Pandey K."/>
            <person name="Chattopadhayay R."/>
            <person name="Yazdani S.S."/>
            <person name="Lynn A."/>
            <person name="Bharadwaj A."/>
            <person name="Ranjan A."/>
            <person name="Chitnis C."/>
        </authorList>
    </citation>
    <scope>INTERACTION WITH PLASMODIUM PVDR (MICROBIAL INFECTION)</scope>
</reference>
<reference key="12">
    <citation type="journal article" date="2003" name="Br. J. Haematol.">
        <title>Structure-function analysis of the extracellular domains of the Duffy antigen/receptor for chemokines: characterization of antibody and chemokine binding sites.</title>
        <authorList>
            <person name="Tournamille C."/>
            <person name="Filipe A."/>
            <person name="Wasniowska K."/>
            <person name="Gane P."/>
            <person name="Lisowska E."/>
            <person name="Cartron J.-P."/>
            <person name="Colin Y."/>
            <person name="Le Van Kim C."/>
        </authorList>
    </citation>
    <scope>DISULFIDE BONDS</scope>
    <scope>GLYCOSYLATION AT ASN-16</scope>
</reference>
<reference key="13">
    <citation type="journal article" date="2005" name="Mol. Biochem. Parasitol.">
        <title>Fine mapping of the Duffy antigen binding site for the Plasmodium vivax Duffy-binding protein.</title>
        <authorList>
            <person name="Tournamille C."/>
            <person name="Filipe A."/>
            <person name="Badaut C."/>
            <person name="Riottot M.M."/>
            <person name="Longacre S."/>
            <person name="Cartron J.P."/>
            <person name="Le Van Kim C."/>
            <person name="Colin Y."/>
        </authorList>
    </citation>
    <scope>INTERACTION WITH PLASMODIUM PVDR (MICROBIAL INFECTION)</scope>
    <scope>PVDR-BINDING REGION</scope>
    <scope>MUTAGENESIS OF GLU-9; LEU-10; SER-11; PRO-12; SER-13; GLU-15; ASN-16; SER-17; SER-18; GLN-19; LEU-20; ASP-21; PHE-22; GLU-23; ASP-24; VAL-25; TRP-26; ASN-27; SER-28; SER-29 AND TYR-30</scope>
</reference>
<reference key="14">
    <citation type="journal article" date="2005" name="Mol. Microbiol.">
        <title>Mapping binding residues in the Plasmodium vivax domain that binds Duffy antigen during red cell invasion.</title>
        <authorList>
            <person name="Hans D."/>
            <person name="Pattnaik P."/>
            <person name="Bhattacharyya A."/>
            <person name="Shakri A.R."/>
            <person name="Yazdani S.S."/>
            <person name="Sharma M."/>
            <person name="Choe H."/>
            <person name="Farzan M."/>
            <person name="Chitnis C.E."/>
        </authorList>
    </citation>
    <scope>INTERACTION WITH PLASMODIUM PVDR (MICROBIAL INFECTION)</scope>
</reference>
<reference key="15">
    <citation type="journal article" date="2007" name="PLoS ONE">
        <title>Reduced Plasmodium vivax erythrocyte infection in PNG Duffy-negative heterozygotes.</title>
        <authorList>
            <person name="Kasehagen L.J."/>
            <person name="Mueller I."/>
            <person name="Kiniboro B."/>
            <person name="Bockarie M.J."/>
            <person name="Reeder J.C."/>
            <person name="Kazura J.W."/>
            <person name="Kastens W."/>
            <person name="McNamara D.T."/>
            <person name="King C.H."/>
            <person name="Whalen C.C."/>
            <person name="Zimmerman P.A."/>
        </authorList>
    </citation>
    <scope>POLYMORPHISM</scope>
    <scope>INVOLVEMENT IN RESISTANCE TO MALARIA</scope>
</reference>
<reference key="16">
    <citation type="journal article" date="2010" name="Curr. Top. Microbiol. Immunol.">
        <title>Chemokine decoy receptors: structure-function and biological properties.</title>
        <authorList>
            <person name="Bonecchi R."/>
            <person name="Savino B."/>
            <person name="Borroni E.M."/>
            <person name="Mantovani A."/>
            <person name="Locati M."/>
        </authorList>
    </citation>
    <scope>REVIEW</scope>
</reference>
<reference key="17">
    <citation type="journal article" date="2012" name="Front. Immunol.">
        <title>Duffy antigen receptor for chemokines and its involvement in patterning and control of inflammatory chemokines.</title>
        <authorList>
            <person name="Novitzky-Basso I."/>
            <person name="Rot A."/>
        </authorList>
    </citation>
    <scope>REVIEW</scope>
</reference>
<reference key="18">
    <citation type="journal article" date="2012" name="Immunol. Lett.">
        <title>The biochemistry and biology of the atypical chemokine receptors.</title>
        <authorList>
            <person name="Graham G.J."/>
            <person name="Locati M."/>
            <person name="Mantovani A."/>
            <person name="Rot A."/>
            <person name="Thelen M."/>
        </authorList>
    </citation>
    <scope>REVIEW</scope>
</reference>
<reference key="19">
    <citation type="journal article" date="2013" name="Biochem. Soc. Trans.">
        <title>Atypical chemokine receptors: from silence to sound.</title>
        <authorList>
            <person name="Cancellieri C."/>
            <person name="Vacchini A."/>
            <person name="Locati M."/>
            <person name="Bonecchi R."/>
            <person name="Borroni E.M."/>
        </authorList>
    </citation>
    <scope>REVIEW</scope>
</reference>
<reference key="20">
    <citation type="journal article" date="2017" name="Malar. J.">
        <title>The Duffy binding protein (PkDBPalphaII) of Plasmodium knowlesi from Peninsular Malaysia and Malaysian Borneo show different binding activity level to human erythrocytes.</title>
        <authorList>
            <person name="Lim K.L."/>
            <person name="Amir A."/>
            <person name="Lau Y.L."/>
            <person name="Fong M.Y."/>
        </authorList>
    </citation>
    <scope>FUNCTION (MICROBIAL INFECTION)</scope>
</reference>
<reference key="21">
    <citation type="journal article" date="2023" name="Cell Host Microbe">
        <title>Unveiling P. vivax invasion pathways in Duffy-negative individuals.</title>
        <authorList>
            <person name="Bouyssou I."/>
            <person name="El Hoss S."/>
            <person name="Doderer-Lang C."/>
            <person name="Schoenhals M."/>
            <person name="Rasoloharimanana L.T."/>
            <person name="Vigan-Womas I."/>
            <person name="Ratsimbasoa A."/>
            <person name="Abate A."/>
            <person name="Golassa L."/>
            <person name="Mabilotte S."/>
            <person name="Kessler P."/>
            <person name="Guillotte-Blisnick M."/>
            <person name="Martinez F.J."/>
            <person name="Chitnis C.E."/>
            <person name="Strouboulis J."/>
            <person name="Menard D."/>
        </authorList>
    </citation>
    <scope>FUNCTION (MICROBIAL INFECTION)</scope>
</reference>
<reference evidence="30 31" key="22">
    <citation type="journal article" date="2014" name="PLoS Pathog.">
        <title>Red blood cell invasion by Plasmodium vivax: structural basis for DBP engagement of DARC.</title>
        <authorList>
            <person name="Batchelor J.D."/>
            <person name="Malpede B.M."/>
            <person name="Omattage N.S."/>
            <person name="DeKoster G.T."/>
            <person name="Henzler-Wildman K.A."/>
            <person name="Tolia N.H."/>
        </authorList>
    </citation>
    <scope>X-RAY CRYSTALLOGRAPHY (1.95 ANGSTROMS) OF 14-43 IN COMPLEX WITH 211-525 OF PLASMODIUM PVDR</scope>
    <scope>INTERACTION WITH PLASMODIUM PVDR (MICROBIAL INFECTION)</scope>
</reference>
<reference evidence="33" key="23">
    <citation type="journal article" date="2023" name="Nat. Commun.">
        <title>Structural basis for DARC binding in reticulocyte invasion by Plasmodium vivax.</title>
        <authorList>
            <person name="Moskovitz R."/>
            <person name="Pholcharee T."/>
            <person name="DonVito S.M."/>
            <person name="Guloglu B."/>
            <person name="Lowe E."/>
            <person name="Mohring F."/>
            <person name="Moon R.W."/>
            <person name="Higgins M.K."/>
        </authorList>
    </citation>
    <scope>X-RAY CRYSTALLOGRAPHY (2.49 ANGSTROMS) OF 1-60 SULFATED AT TYR-41 IN COMPLEX WITH 215-508 OF PLASMODIUM PVDR AND MONOCLONAL ANTIBODY</scope>
    <scope>SULFATION (MICROBIAL INFECTION)</scope>
</reference>
<reference key="24">
    <citation type="journal article" date="1995" name="Hum. Genet.">
        <title>Molecular basis and PCR-DNA typing of the Fya/fyb blood group polymorphism.</title>
        <authorList>
            <person name="Tournamille C."/>
            <person name="Le van Kim C."/>
            <person name="Gane P."/>
            <person name="Cartron J.-P."/>
            <person name="Colin Y."/>
        </authorList>
    </citation>
    <scope>VARIANT ASP-42</scope>
    <source>
        <tissue>Peripheral blood</tissue>
    </source>
</reference>
<reference key="25">
    <citation type="journal article" date="1998" name="Blood">
        <title>A novel mutation in the coding sequence of the FY*B allele of the Duffy chemokine receptor gene is associated with an altered erythrocyte phenotype.</title>
        <authorList>
            <person name="Parasol N."/>
            <person name="Reid M."/>
            <person name="Rios M."/>
            <person name="Castilho L."/>
            <person name="Harari I."/>
            <person name="Kosower N.S."/>
        </authorList>
    </citation>
    <scope>VARIANT CYS-89</scope>
</reference>
<reference key="26">
    <citation type="journal article" date="2005" name="Mol. Microbiol.">
        <title>Sulphated tyrosines mediate association of chemokines and Plasmodium vivax Duffy binding protein with the Duffy antigen/receptor for chemokines (DARC).</title>
        <authorList>
            <person name="Choe H."/>
            <person name="Moore M.J."/>
            <person name="Owens C.M."/>
            <person name="Wright P.L."/>
            <person name="Vasilieva N."/>
            <person name="Li W."/>
            <person name="Singh A.P."/>
            <person name="Shakri R."/>
            <person name="Chitnis C.E."/>
            <person name="Farzan M."/>
        </authorList>
    </citation>
    <scope>VARIANT ASP-42</scope>
    <scope>SULFATION AT TYR-30 AND TYR-41</scope>
    <scope>SULFATION (MICROBIAL INFECTION)</scope>
    <scope>MUTAGENESIS OF TYR-30 AND TYR-41</scope>
</reference>
<reference key="27">
    <citation type="journal article" date="2008" name="Am. J. Hum. Genet.">
        <title>Admixture mapping of white cell count: genetic locus responsible for lower white blood cell count in the Health ABC and Jackson Heart Studies.</title>
        <authorList>
            <person name="Nalls M.A."/>
            <person name="Wilson J.G."/>
            <person name="Patterson N.J."/>
            <person name="Tandon A."/>
            <person name="Zmuda J.M."/>
            <person name="Huntsman S."/>
            <person name="Garcia M."/>
            <person name="Hu D."/>
            <person name="Li R."/>
            <person name="Beamer B.A."/>
            <person name="Patel K.V."/>
            <person name="Akylbekova E.L."/>
            <person name="Files J.C."/>
            <person name="Hardy C.L."/>
            <person name="Buxbaum S.G."/>
            <person name="Taylor H.A."/>
            <person name="Reich D."/>
            <person name="Harris T.B."/>
            <person name="Ziv E."/>
        </authorList>
    </citation>
    <scope>INVOLVEMENT IN WBCQ1</scope>
</reference>
<reference key="28">
    <citation type="journal article" date="2008" name="Am. J. Hum. Genet.">
        <authorList>
            <person name="Nalls M.A."/>
            <person name="Wilson J.G."/>
            <person name="Patterson N.J."/>
            <person name="Tandon A."/>
            <person name="Zmuda J.M."/>
            <person name="Huntsman S."/>
            <person name="Garcia M."/>
            <person name="Hu D."/>
            <person name="Li R."/>
            <person name="Beamer B.A."/>
            <person name="Patel K.V."/>
            <person name="Akylbekova E.L."/>
            <person name="Files J.C."/>
            <person name="Hardy C.L."/>
            <person name="Buxbaum S.G."/>
            <person name="Taylor H.A."/>
            <person name="Reich D."/>
            <person name="Harris T.B."/>
            <person name="Ziv E."/>
        </authorList>
    </citation>
    <scope>ERRATUM OF PUBMED:18179887</scope>
</reference>
<keyword id="KW-0002">3D-structure</keyword>
<keyword id="KW-0025">Alternative splicing</keyword>
<keyword id="KW-0095">Blood group antigen</keyword>
<keyword id="KW-0903">Direct protein sequencing</keyword>
<keyword id="KW-1015">Disulfide bond</keyword>
<keyword id="KW-0967">Endosome</keyword>
<keyword id="KW-0297">G-protein coupled receptor</keyword>
<keyword id="KW-0325">Glycoprotein</keyword>
<keyword id="KW-0472">Membrane</keyword>
<keyword id="KW-1267">Proteomics identification</keyword>
<keyword id="KW-0675">Receptor</keyword>
<keyword id="KW-1185">Reference proteome</keyword>
<keyword id="KW-0765">Sulfation</keyword>
<keyword id="KW-0807">Transducer</keyword>
<keyword id="KW-0812">Transmembrane</keyword>
<keyword id="KW-1133">Transmembrane helix</keyword>
<evidence type="ECO:0000255" key="1"/>
<evidence type="ECO:0000269" key="2">
    <source>
    </source>
</evidence>
<evidence type="ECO:0000269" key="3">
    <source>
    </source>
</evidence>
<evidence type="ECO:0000269" key="4">
    <source>
    </source>
</evidence>
<evidence type="ECO:0000269" key="5">
    <source>
    </source>
</evidence>
<evidence type="ECO:0000269" key="6">
    <source>
    </source>
</evidence>
<evidence type="ECO:0000269" key="7">
    <source>
    </source>
</evidence>
<evidence type="ECO:0000269" key="8">
    <source>
    </source>
</evidence>
<evidence type="ECO:0000269" key="9">
    <source>
    </source>
</evidence>
<evidence type="ECO:0000269" key="10">
    <source>
    </source>
</evidence>
<evidence type="ECO:0000269" key="11">
    <source>
    </source>
</evidence>
<evidence type="ECO:0000269" key="12">
    <source>
    </source>
</evidence>
<evidence type="ECO:0000269" key="13">
    <source>
    </source>
</evidence>
<evidence type="ECO:0000269" key="14">
    <source>
    </source>
</evidence>
<evidence type="ECO:0000269" key="15">
    <source>
    </source>
</evidence>
<evidence type="ECO:0000269" key="16">
    <source>
    </source>
</evidence>
<evidence type="ECO:0000269" key="17">
    <source>
    </source>
</evidence>
<evidence type="ECO:0000269" key="18">
    <source>
    </source>
</evidence>
<evidence type="ECO:0000269" key="19">
    <source ref="6"/>
</evidence>
<evidence type="ECO:0000303" key="20">
    <source>
    </source>
</evidence>
<evidence type="ECO:0000303" key="21">
    <source>
    </source>
</evidence>
<evidence type="ECO:0000303" key="22">
    <source>
    </source>
</evidence>
<evidence type="ECO:0000303" key="23">
    <source>
    </source>
</evidence>
<evidence type="ECO:0000303" key="24">
    <source>
    </source>
</evidence>
<evidence type="ECO:0000303" key="25">
    <source>
    </source>
</evidence>
<evidence type="ECO:0000303" key="26">
    <source>
    </source>
</evidence>
<evidence type="ECO:0000303" key="27">
    <source>
    </source>
</evidence>
<evidence type="ECO:0000303" key="28">
    <source>
    </source>
</evidence>
<evidence type="ECO:0000305" key="29"/>
<evidence type="ECO:0007744" key="30">
    <source>
        <dbReference type="PDB" id="4NUU"/>
    </source>
</evidence>
<evidence type="ECO:0007744" key="31">
    <source>
        <dbReference type="PDB" id="4NUV"/>
    </source>
</evidence>
<evidence type="ECO:0007829" key="32">
    <source>
        <dbReference type="PDB" id="4NUU"/>
    </source>
</evidence>
<evidence type="ECO:0007829" key="33">
    <source>
        <dbReference type="PDB" id="8A44"/>
    </source>
</evidence>
<dbReference type="EMBL" id="U01839">
    <property type="protein sequence ID" value="AAC50055.1"/>
    <property type="molecule type" value="mRNA"/>
</dbReference>
<dbReference type="EMBL" id="X85785">
    <property type="protein sequence ID" value="CAA59770.1"/>
    <property type="molecule type" value="Genomic_DNA"/>
</dbReference>
<dbReference type="EMBL" id="S76830">
    <property type="protein sequence ID" value="AAB33239.1"/>
    <property type="molecule type" value="Genomic_DNA"/>
</dbReference>
<dbReference type="EMBL" id="AF055992">
    <property type="protein sequence ID" value="AAC72301.1"/>
    <property type="molecule type" value="Genomic_DNA"/>
</dbReference>
<dbReference type="EMBL" id="AF030521">
    <property type="protein sequence ID" value="AAD20435.1"/>
    <property type="molecule type" value="mRNA"/>
</dbReference>
<dbReference type="EMBL" id="AM887935">
    <property type="protein sequence ID" value="CAP12644.1"/>
    <property type="molecule type" value="Genomic_DNA"/>
</dbReference>
<dbReference type="EMBL" id="AL035403">
    <property type="status" value="NOT_ANNOTATED_CDS"/>
    <property type="molecule type" value="Genomic_DNA"/>
</dbReference>
<dbReference type="EMBL" id="BC017817">
    <property type="protein sequence ID" value="AAH17817.1"/>
    <property type="molecule type" value="mRNA"/>
</dbReference>
<dbReference type="EMBL" id="AF100634">
    <property type="protein sequence ID" value="AAF02415.1"/>
    <property type="molecule type" value="Genomic_DNA"/>
</dbReference>
<dbReference type="EMBL" id="AF100634">
    <property type="protein sequence ID" value="AAF02416.1"/>
    <property type="molecule type" value="Genomic_DNA"/>
</dbReference>
<dbReference type="CCDS" id="CCDS1183.1">
    <molecule id="Q16570-1"/>
</dbReference>
<dbReference type="CCDS" id="CCDS44252.1">
    <molecule id="Q16570-2"/>
</dbReference>
<dbReference type="PIR" id="I52608">
    <property type="entry name" value="I52608"/>
</dbReference>
<dbReference type="RefSeq" id="NP_001116423.1">
    <molecule id="Q16570-2"/>
    <property type="nucleotide sequence ID" value="NM_001122951.3"/>
</dbReference>
<dbReference type="RefSeq" id="NP_002027.2">
    <molecule id="Q16570-1"/>
    <property type="nucleotide sequence ID" value="NM_002036.3"/>
</dbReference>
<dbReference type="PDB" id="4NUU">
    <property type="method" value="X-ray"/>
    <property type="resolution" value="1.95 A"/>
    <property type="chains" value="C=16-43"/>
</dbReference>
<dbReference type="PDB" id="4NUV">
    <property type="method" value="X-ray"/>
    <property type="resolution" value="2.60 A"/>
    <property type="chains" value="C/D=14-43"/>
</dbReference>
<dbReference type="PDB" id="7P93">
    <property type="method" value="X-ray"/>
    <property type="resolution" value="1.55 A"/>
    <property type="chains" value="B/M=34-46"/>
</dbReference>
<dbReference type="PDB" id="8A44">
    <property type="method" value="X-ray"/>
    <property type="resolution" value="2.49 A"/>
    <property type="chains" value="B=1-60"/>
</dbReference>
<dbReference type="PDB" id="8JPS">
    <property type="method" value="EM"/>
    <property type="resolution" value="3.65 A"/>
    <property type="chains" value="A/B=46-312"/>
</dbReference>
<dbReference type="PDBsum" id="4NUU"/>
<dbReference type="PDBsum" id="4NUV"/>
<dbReference type="PDBsum" id="7P93"/>
<dbReference type="PDBsum" id="8A44"/>
<dbReference type="PDBsum" id="8JPS"/>
<dbReference type="EMDB" id="EMD-36488"/>
<dbReference type="SMR" id="Q16570"/>
<dbReference type="BioGRID" id="108808">
    <property type="interactions" value="3"/>
</dbReference>
<dbReference type="ComplexPortal" id="CPX-9841">
    <property type="entry name" value="CXCL8-ACKR1, atypical receptor-ligand complex"/>
</dbReference>
<dbReference type="DIP" id="DIP-3783N"/>
<dbReference type="FunCoup" id="Q16570">
    <property type="interactions" value="319"/>
</dbReference>
<dbReference type="IntAct" id="Q16570">
    <property type="interactions" value="3"/>
</dbReference>
<dbReference type="MINT" id="Q16570"/>
<dbReference type="STRING" id="9606.ENSP00000357103"/>
<dbReference type="ChEMBL" id="CHEMBL2321626"/>
<dbReference type="DrugBank" id="DB17749">
    <property type="generic name" value="AQ-13"/>
</dbReference>
<dbReference type="DrugBank" id="DB00608">
    <property type="generic name" value="Chloroquine"/>
</dbReference>
<dbReference type="TCDB" id="9.A.14.13.34">
    <property type="family name" value="the g-protein-coupled receptor (gpcr) family"/>
</dbReference>
<dbReference type="GlyCosmos" id="Q16570">
    <property type="glycosylation" value="2 sites, No reported glycans"/>
</dbReference>
<dbReference type="GlyGen" id="Q16570">
    <property type="glycosylation" value="8 sites"/>
</dbReference>
<dbReference type="iPTMnet" id="Q16570"/>
<dbReference type="PhosphoSitePlus" id="Q16570"/>
<dbReference type="BioMuta" id="ACKR1"/>
<dbReference type="DMDM" id="67476970"/>
<dbReference type="MassIVE" id="Q16570"/>
<dbReference type="PaxDb" id="9606-ENSP00000357103"/>
<dbReference type="PeptideAtlas" id="Q16570"/>
<dbReference type="ProteomicsDB" id="60923">
    <molecule id="Q16570-1"/>
</dbReference>
<dbReference type="ProteomicsDB" id="60924">
    <molecule id="Q16570-2"/>
</dbReference>
<dbReference type="ABCD" id="Q16570">
    <property type="antibodies" value="1 sequenced antibody"/>
</dbReference>
<dbReference type="Antibodypedia" id="2945">
    <property type="antibodies" value="536 antibodies from 40 providers"/>
</dbReference>
<dbReference type="DNASU" id="2532"/>
<dbReference type="Ensembl" id="ENST00000368121.6">
    <molecule id="Q16570-2"/>
    <property type="protein sequence ID" value="ENSP00000357103.2"/>
    <property type="gene ID" value="ENSG00000213088.14"/>
</dbReference>
<dbReference type="Ensembl" id="ENST00000368122.4">
    <molecule id="Q16570-1"/>
    <property type="protein sequence ID" value="ENSP00000357104.1"/>
    <property type="gene ID" value="ENSG00000213088.14"/>
</dbReference>
<dbReference type="GeneID" id="2532"/>
<dbReference type="KEGG" id="hsa:2532"/>
<dbReference type="MANE-Select" id="ENST00000368122.4">
    <property type="protein sequence ID" value="ENSP00000357104.1"/>
    <property type="RefSeq nucleotide sequence ID" value="NM_002036.4"/>
    <property type="RefSeq protein sequence ID" value="NP_002027.2"/>
</dbReference>
<dbReference type="AGR" id="HGNC:4035"/>
<dbReference type="CTD" id="2532"/>
<dbReference type="DisGeNET" id="2532"/>
<dbReference type="GeneCards" id="ACKR1"/>
<dbReference type="HGNC" id="HGNC:4035">
    <property type="gene designation" value="ACKR1"/>
</dbReference>
<dbReference type="HPA" id="ENSG00000213088">
    <property type="expression patterns" value="Tissue enhanced (adipose)"/>
</dbReference>
<dbReference type="MalaCards" id="ACKR1"/>
<dbReference type="MIM" id="110700">
    <property type="type" value="phenotype"/>
</dbReference>
<dbReference type="MIM" id="611162">
    <property type="type" value="phenotype"/>
</dbReference>
<dbReference type="MIM" id="611862">
    <property type="type" value="phenotype"/>
</dbReference>
<dbReference type="MIM" id="613665">
    <property type="type" value="gene"/>
</dbReference>
<dbReference type="neXtProt" id="NX_Q16570"/>
<dbReference type="OpenTargets" id="ENSG00000213088"/>
<dbReference type="PharmGKB" id="PA28451"/>
<dbReference type="VEuPathDB" id="HostDB:ENSG00000213088"/>
<dbReference type="eggNOG" id="ENOG502SNW7">
    <property type="taxonomic scope" value="Eukaryota"/>
</dbReference>
<dbReference type="GeneTree" id="ENSGT00390000006372"/>
<dbReference type="HOGENOM" id="CLU_813693_0_0_1"/>
<dbReference type="InParanoid" id="Q16570"/>
<dbReference type="OMA" id="VWYSSAF"/>
<dbReference type="OrthoDB" id="9396544at2759"/>
<dbReference type="PAN-GO" id="Q16570">
    <property type="GO annotations" value="3 GO annotations based on evolutionary models"/>
</dbReference>
<dbReference type="PhylomeDB" id="Q16570"/>
<dbReference type="TreeFam" id="TF105419"/>
<dbReference type="PathwayCommons" id="Q16570"/>
<dbReference type="Reactome" id="R-HSA-375276">
    <property type="pathway name" value="Peptide ligand-binding receptors"/>
</dbReference>
<dbReference type="SignaLink" id="Q16570"/>
<dbReference type="BioGRID-ORCS" id="2532">
    <property type="hits" value="13 hits in 1137 CRISPR screens"/>
</dbReference>
<dbReference type="CD-CODE" id="FB4E32DD">
    <property type="entry name" value="Presynaptic clusters and postsynaptic densities"/>
</dbReference>
<dbReference type="ChiTaRS" id="ACKR1">
    <property type="organism name" value="human"/>
</dbReference>
<dbReference type="EvolutionaryTrace" id="Q16570"/>
<dbReference type="GeneWiki" id="Duffy_antigen_system"/>
<dbReference type="GenomeRNAi" id="2532"/>
<dbReference type="Pharos" id="Q16570">
    <property type="development level" value="Tbio"/>
</dbReference>
<dbReference type="PRO" id="PR:Q16570"/>
<dbReference type="Proteomes" id="UP000005640">
    <property type="component" value="Chromosome 1"/>
</dbReference>
<dbReference type="RNAct" id="Q16570">
    <property type="molecule type" value="protein"/>
</dbReference>
<dbReference type="Bgee" id="ENSG00000213088">
    <property type="expression patterns" value="Expressed in vena cava and 169 other cell types or tissues"/>
</dbReference>
<dbReference type="ExpressionAtlas" id="Q16570">
    <property type="expression patterns" value="baseline and differential"/>
</dbReference>
<dbReference type="GO" id="GO:0005769">
    <property type="term" value="C:early endosome"/>
    <property type="evidence" value="ECO:0007669"/>
    <property type="project" value="UniProtKB-SubCell"/>
</dbReference>
<dbReference type="GO" id="GO:0005886">
    <property type="term" value="C:plasma membrane"/>
    <property type="evidence" value="ECO:0000304"/>
    <property type="project" value="Reactome"/>
</dbReference>
<dbReference type="GO" id="GO:0055037">
    <property type="term" value="C:recycling endosome"/>
    <property type="evidence" value="ECO:0007669"/>
    <property type="project" value="UniProtKB-SubCell"/>
</dbReference>
<dbReference type="GO" id="GO:0019957">
    <property type="term" value="F:C-C chemokine binding"/>
    <property type="evidence" value="ECO:0000353"/>
    <property type="project" value="BHF-UCL"/>
</dbReference>
<dbReference type="GO" id="GO:0004930">
    <property type="term" value="F:G protein-coupled receptor activity"/>
    <property type="evidence" value="ECO:0007669"/>
    <property type="project" value="UniProtKB-KW"/>
</dbReference>
<dbReference type="GO" id="GO:0038023">
    <property type="term" value="F:signaling receptor activity"/>
    <property type="evidence" value="ECO:0000304"/>
    <property type="project" value="ProtInc"/>
</dbReference>
<dbReference type="GO" id="GO:0004888">
    <property type="term" value="F:transmembrane signaling receptor activity"/>
    <property type="evidence" value="ECO:0000304"/>
    <property type="project" value="ProtInc"/>
</dbReference>
<dbReference type="GO" id="GO:0070098">
    <property type="term" value="P:chemokine-mediated signaling pathway"/>
    <property type="evidence" value="ECO:0007669"/>
    <property type="project" value="InterPro"/>
</dbReference>
<dbReference type="GO" id="GO:0006952">
    <property type="term" value="P:defense response"/>
    <property type="evidence" value="ECO:0000303"/>
    <property type="project" value="UniProtKB"/>
</dbReference>
<dbReference type="GO" id="GO:0006954">
    <property type="term" value="P:inflammatory response"/>
    <property type="evidence" value="ECO:0000318"/>
    <property type="project" value="GO_Central"/>
</dbReference>
<dbReference type="GO" id="GO:0032642">
    <property type="term" value="P:regulation of chemokine production"/>
    <property type="evidence" value="ECO:0000318"/>
    <property type="project" value="GO_Central"/>
</dbReference>
<dbReference type="CDD" id="cd15010">
    <property type="entry name" value="7tmA_ACKR1_DARC"/>
    <property type="match status" value="1"/>
</dbReference>
<dbReference type="FunFam" id="1.20.1070.10:FF:000266">
    <property type="entry name" value="Atypical chemokine receptor 1"/>
    <property type="match status" value="1"/>
</dbReference>
<dbReference type="Gene3D" id="1.20.1070.10">
    <property type="entry name" value="Rhodopsin 7-helix transmembrane proteins"/>
    <property type="match status" value="1"/>
</dbReference>
<dbReference type="InterPro" id="IPR005384">
    <property type="entry name" value="Duffy_chemokine_rcpt"/>
</dbReference>
<dbReference type="PANTHER" id="PTHR14181:SF1">
    <property type="entry name" value="ATYPICAL CHEMOKINE RECEPTOR 1"/>
    <property type="match status" value="1"/>
</dbReference>
<dbReference type="PANTHER" id="PTHR14181">
    <property type="entry name" value="DUFFY ANTIGEN/CHEMOKINE RECEPTOR"/>
    <property type="match status" value="1"/>
</dbReference>
<dbReference type="PRINTS" id="PR01559">
    <property type="entry name" value="DUFFYANTIGEN"/>
</dbReference>
<accession>Q16570</accession>
<accession>A8YPG5</accession>
<accession>O75898</accession>
<accession>Q16300</accession>
<accession>Q8WWE3</accession>
<accession>Q9UJP0</accession>
<accession>Q9UKZ5</accession>
<accession>Q9UKZ6</accession>
<accession>Q9UQE1</accession>
<feature type="chain" id="PRO_0000152585" description="Atypical chemokine receptor 1">
    <location>
        <begin position="1"/>
        <end position="336"/>
    </location>
</feature>
<feature type="topological domain" description="Extracellular" evidence="1">
    <location>
        <begin position="1"/>
        <end position="63"/>
    </location>
</feature>
<feature type="transmembrane region" description="Helical; Name=1" evidence="1">
    <location>
        <begin position="64"/>
        <end position="84"/>
    </location>
</feature>
<feature type="topological domain" description="Cytoplasmic" evidence="1">
    <location>
        <begin position="85"/>
        <end position="95"/>
    </location>
</feature>
<feature type="transmembrane region" description="Helical; Name=2" evidence="1">
    <location>
        <begin position="96"/>
        <end position="116"/>
    </location>
</feature>
<feature type="topological domain" description="Extracellular" evidence="1">
    <location>
        <begin position="117"/>
        <end position="129"/>
    </location>
</feature>
<feature type="transmembrane region" description="Helical; Name=3" evidence="1">
    <location>
        <begin position="130"/>
        <end position="153"/>
    </location>
</feature>
<feature type="topological domain" description="Cytoplasmic" evidence="1">
    <location>
        <begin position="154"/>
        <end position="166"/>
    </location>
</feature>
<feature type="transmembrane region" description="Helical; Name=4" evidence="1">
    <location>
        <begin position="167"/>
        <end position="187"/>
    </location>
</feature>
<feature type="topological domain" description="Extracellular" evidence="1">
    <location>
        <begin position="188"/>
        <end position="207"/>
    </location>
</feature>
<feature type="transmembrane region" description="Helical; Name=5" evidence="1">
    <location>
        <begin position="208"/>
        <end position="228"/>
    </location>
</feature>
<feature type="topological domain" description="Cytoplasmic" evidence="1">
    <location>
        <begin position="229"/>
        <end position="244"/>
    </location>
</feature>
<feature type="transmembrane region" description="Helical; Name=6" evidence="1">
    <location>
        <begin position="245"/>
        <end position="265"/>
    </location>
</feature>
<feature type="topological domain" description="Extracellular" evidence="1">
    <location>
        <begin position="266"/>
        <end position="287"/>
    </location>
</feature>
<feature type="transmembrane region" description="Helical; Name=7" evidence="1">
    <location>
        <begin position="288"/>
        <end position="308"/>
    </location>
</feature>
<feature type="topological domain" description="Cytoplasmic" evidence="1">
    <location>
        <begin position="309"/>
        <end position="336"/>
    </location>
</feature>
<feature type="region of interest" description="Mediates Plasmodium vivax Duffy receptor (PVDR) binding" evidence="7">
    <location>
        <begin position="1"/>
        <end position="30"/>
    </location>
</feature>
<feature type="modified residue" description="Sulfotyrosine" evidence="5">
    <location>
        <position position="30"/>
    </location>
</feature>
<feature type="modified residue" description="Sulfotyrosine" evidence="5">
    <location>
        <position position="41"/>
    </location>
</feature>
<feature type="glycosylation site" description="N-linked (GlcNAc...) asparagine" evidence="3">
    <location>
        <position position="16"/>
    </location>
</feature>
<feature type="glycosylation site" description="N-linked (GlcNAc...) asparagine" evidence="1">
    <location>
        <position position="33"/>
    </location>
</feature>
<feature type="disulfide bond" evidence="3">
    <location>
        <begin position="51"/>
        <end position="276"/>
    </location>
</feature>
<feature type="disulfide bond" evidence="3">
    <location>
        <begin position="129"/>
        <end position="195"/>
    </location>
</feature>
<feature type="splice variant" id="VSP_001323" description="In isoform 1." evidence="26 28">
    <original>MGNCLHR</original>
    <variation>MASSGYVLQ</variation>
    <location>
        <begin position="1"/>
        <end position="7"/>
    </location>
</feature>
<feature type="sequence variant" id="VAR_003480" description="Antigen Fy(b); does not affect the efficiency of sulfation of TYR-41; dbSNP:rs12075." evidence="5 12 13 14 16 18">
    <original>G</original>
    <variation>D</variation>
    <location>
        <position position="42"/>
    </location>
</feature>
<feature type="sequence variant" id="VAR_015068" description="Antigen Fy(x); dbSNP:rs34599082." evidence="16 17 18">
    <original>R</original>
    <variation>C</variation>
    <location>
        <position position="89"/>
    </location>
</feature>
<feature type="sequence variant" id="VAR_015069" description="In dbSNP:rs13962." evidence="16 18">
    <original>A</original>
    <variation>T</variation>
    <location>
        <position position="100"/>
    </location>
</feature>
<feature type="sequence variant" id="VAR_044116" description="In dbSNP:rs3027020.">
    <original>L</original>
    <variation>Q</variation>
    <location>
        <position position="203"/>
    </location>
</feature>
<feature type="sequence variant" id="VAR_044117" description="In dbSNP:rs17851570." evidence="4 19">
    <original>S</original>
    <variation>F</variation>
    <location>
        <position position="326"/>
    </location>
</feature>
<feature type="mutagenesis site" description="Does not affect interaction with Plasmodium vivax Duffy receptor (PVDR)." evidence="7">
    <original>E</original>
    <variation>A</variation>
    <location>
        <position position="9"/>
    </location>
</feature>
<feature type="mutagenesis site" description="Does not affect interaction with Plasmodium vivax Duffy receptor (PVDR)." evidence="7">
    <original>L</original>
    <variation>A</variation>
    <location>
        <position position="10"/>
    </location>
</feature>
<feature type="mutagenesis site" description="Does not affect interaction with Plasmodium vivax Duffy receptor (PVDR)." evidence="7">
    <original>S</original>
    <variation>A</variation>
    <location>
        <position position="11"/>
    </location>
</feature>
<feature type="mutagenesis site" description="Does not affect interaction with Plasmodium vivax Duffy receptor (PVDR)." evidence="7">
    <original>P</original>
    <variation>A</variation>
    <location>
        <position position="12"/>
    </location>
</feature>
<feature type="mutagenesis site" description="Does not affect interaction with Plasmodium vivax Duffy receptor (PVDR)." evidence="7">
    <original>S</original>
    <variation>A</variation>
    <location>
        <position position="13"/>
    </location>
</feature>
<feature type="mutagenesis site" description="Does not affect interaction with Plasmodium vivax Duffy receptor (PVDR)." evidence="7">
    <original>E</original>
    <variation>A</variation>
    <location>
        <position position="15"/>
    </location>
</feature>
<feature type="mutagenesis site" description="Does not affect interaction with Plasmodium vivax Duffy receptor (PVDR)." evidence="7">
    <original>N</original>
    <variation>A</variation>
    <location>
        <position position="16"/>
    </location>
</feature>
<feature type="mutagenesis site" description="Does not affect interaction with Plasmodium vivax Duffy receptor (PVDR)." evidence="7">
    <original>S</original>
    <variation>A</variation>
    <location>
        <position position="17"/>
    </location>
</feature>
<feature type="mutagenesis site" description="Does not affect interaction with Plasmodium vivax Duffy receptor (PVDR)." evidence="7">
    <original>S</original>
    <variation>A</variation>
    <location>
        <position position="18"/>
    </location>
</feature>
<feature type="mutagenesis site" description="Modulates the affinity of the interaction with Plasmodium vivax Duffy receptor (PVDR)." evidence="7">
    <original>Q</original>
    <variation>A</variation>
    <location>
        <position position="19"/>
    </location>
</feature>
<feature type="mutagenesis site" description="Significantly reduces binding with Plasmodium vivax Duffy receptor (PVDR)." evidence="7">
    <original>L</original>
    <variation>A</variation>
    <location>
        <position position="20"/>
    </location>
</feature>
<feature type="mutagenesis site" description="Significantly reduces binding with Plasmodium vivax Duffy receptor (PVDR)." evidence="7">
    <original>D</original>
    <variation>A</variation>
    <location>
        <position position="21"/>
    </location>
</feature>
<feature type="mutagenesis site" description="Significantly reduces binding with Plasmodium vivax Duffy receptor (PVDR)." evidence="7">
    <original>F</original>
    <variation>A</variation>
    <location>
        <position position="22"/>
    </location>
</feature>
<feature type="mutagenesis site" description="Modulates the affinity of the interaction with Plasmodium vivax Duffy receptor (PVDR)." evidence="7">
    <original>E</original>
    <variation>A</variation>
    <location>
        <position position="23"/>
    </location>
</feature>
<feature type="mutagenesis site" description="Significantly reduces binding with Plasmodium vivax Duffy receptor (PVDR)." evidence="7">
    <original>D</original>
    <variation>A</variation>
    <location>
        <position position="24"/>
    </location>
</feature>
<feature type="mutagenesis site" description="Significantly reduces binding with Plasmodium vivax Duffy receptor (PVDR)." evidence="7">
    <original>V</original>
    <variation>A</variation>
    <location>
        <position position="25"/>
    </location>
</feature>
<feature type="mutagenesis site" description="Significantly reduces binding with Plasmodium vivax Duffy receptor (PVDR)." evidence="7">
    <original>W</original>
    <variation>A</variation>
    <location>
        <position position="26"/>
    </location>
</feature>
<feature type="mutagenesis site" description="Does not affect interaction with Plasmodium vivax Duffy receptor (PVDR)." evidence="7">
    <original>N</original>
    <variation>A</variation>
    <location>
        <position position="27"/>
    </location>
</feature>
<feature type="mutagenesis site" description="Does not affect interaction with Plasmodium vivax Duffy receptor (PVDR)." evidence="7">
    <original>S</original>
    <variation>A</variation>
    <location>
        <position position="28"/>
    </location>
</feature>
<feature type="mutagenesis site" description="Does not affect interaction with Plasmodium vivax Duffy receptor (PVDR)." evidence="7">
    <original>S</original>
    <variation>A</variation>
    <location>
        <position position="29"/>
    </location>
</feature>
<feature type="mutagenesis site" description="Does not affect interaction with Plasmodium vivax Duffy receptor (PVDR)." evidence="7">
    <original>Y</original>
    <variation>A</variation>
    <location>
        <position position="30"/>
    </location>
</feature>
<feature type="mutagenesis site" description="Abolishes sulfation. Reduces binding with IL8/CXCL8." evidence="5">
    <original>Y</original>
    <variation>F</variation>
    <location>
        <position position="30"/>
    </location>
</feature>
<feature type="mutagenesis site" description="Abolishes sulfation. Reduces binding with MGSA/CXCL1, RANTES/CCL5 and MCP-1/CCL2. Reduces binding with Plasmodium vivax Duffy receptor (PVDR) and Plasmodium knowlesi Duffy receptor alpha form (DBPalpha)." evidence="5">
    <original>Y</original>
    <variation>F</variation>
    <location>
        <position position="41"/>
    </location>
</feature>
<feature type="helix" evidence="32">
    <location>
        <begin position="22"/>
        <end position="28"/>
    </location>
</feature>
<feature type="strand" evidence="33">
    <location>
        <begin position="44"/>
        <end position="46"/>
    </location>
</feature>
<organism>
    <name type="scientific">Homo sapiens</name>
    <name type="common">Human</name>
    <dbReference type="NCBI Taxonomy" id="9606"/>
    <lineage>
        <taxon>Eukaryota</taxon>
        <taxon>Metazoa</taxon>
        <taxon>Chordata</taxon>
        <taxon>Craniata</taxon>
        <taxon>Vertebrata</taxon>
        <taxon>Euteleostomi</taxon>
        <taxon>Mammalia</taxon>
        <taxon>Eutheria</taxon>
        <taxon>Euarchontoglires</taxon>
        <taxon>Primates</taxon>
        <taxon>Haplorrhini</taxon>
        <taxon>Catarrhini</taxon>
        <taxon>Hominidae</taxon>
        <taxon>Homo</taxon>
    </lineage>
</organism>
<protein>
    <recommendedName>
        <fullName>Atypical chemokine receptor 1</fullName>
    </recommendedName>
    <alternativeName>
        <fullName evidence="20 21 22 23 24 25">Duffy antigen receptor for chemokines</fullName>
    </alternativeName>
    <alternativeName>
        <fullName>Duffy antigen/chemokine receptor</fullName>
    </alternativeName>
    <alternativeName>
        <fullName evidence="22 27">Duffy blood group antigen</fullName>
    </alternativeName>
    <alternativeName>
        <fullName>Fy glycoprotein</fullName>
        <shortName>GpFy</shortName>
    </alternativeName>
    <alternativeName>
        <fullName>Glycoprotein D</fullName>
    </alternativeName>
    <alternativeName>
        <fullName>Plasmodium vivax receptor</fullName>
    </alternativeName>
    <cdAntigenName>CD234</cdAntigenName>
</protein>
<gene>
    <name type="primary">ACKR1</name>
    <name evidence="20 21 22 23 24 25" type="synonym">DARC</name>
    <name type="synonym">FY</name>
    <name type="synonym">GPD</name>
</gene>
<proteinExistence type="evidence at protein level"/>
<comment type="function">
    <text>Atypical chemokine receptor that controls chemokine levels and localization via high-affinity chemokine binding that is uncoupled from classic ligand-driven signal transduction cascades, resulting instead in chemokine sequestration, degradation, or transcytosis. Also known as interceptor (internalizing receptor) or chemokine-scavenging receptor or chemokine decoy receptor. Has a promiscuous chemokine-binding profile, interacting with inflammatory chemokines of both the CXC and the CC subfamilies but not with homeostatic chemokines. Acts as a receptor for chemokines including CCL2, CCL5, CCL7, CCL11, CCL13, CCL14, CCL17, CXCL5, CXCL6, IL8/CXCL8, CXCL11, GRO, RANTES, MCP-1 and TARC. May regulate chemokine bioavailability and, consequently, leukocyte recruitment through two distinct mechanisms: when expressed in endothelial cells, it sustains the abluminal to luminal transcytosis of tissue-derived chemokines and their subsequent presentation to circulating leukocytes; when expressed in erythrocytes, serves as blood reservoir of cognate chemokines but also as a chemokine sink, buffering potential surges in plasma chemokine levels.</text>
</comment>
<comment type="function">
    <text evidence="11">(Microbial infection) Acts as a receptor for the malaria parasite Plasmodium vivax.</text>
</comment>
<comment type="function">
    <text evidence="9">(Microbial infection) Acts as a receptor for the malaria parasite Plasmodium knowlesi.</text>
</comment>
<comment type="subunit">
    <text evidence="2 6 7 8 15">(Microbial infection) Interacts (via N-terminal extracellular domain) with Plasmodium vivax Duffy receptor (PVDR) (via PvRII region).</text>
</comment>
<comment type="subunit">
    <text evidence="15">(Microbial infection) Interacts (via N-terminal extracellular domain) with Plasmodium knowlesi Duffy receptor alpha form (DBPalpha) (via region II).</text>
</comment>
<comment type="interaction">
    <interactant intactId="EBI-15935975">
        <id>Q16570-1</id>
    </interactant>
    <interactant intactId="EBI-15935953">
        <id>P22290</id>
        <label>PVDR</label>
    </interactant>
    <organismsDiffer>true</organismsDiffer>
    <experiments>3</experiments>
</comment>
<comment type="interaction">
    <interactant intactId="EBI-21403047">
        <id>Q16570-2</id>
    </interactant>
    <interactant intactId="EBI-489374">
        <id>P51681</id>
        <label>CCR5</label>
    </interactant>
    <organismsDiffer>false</organismsDiffer>
    <experiments>3</experiments>
</comment>
<comment type="subcellular location">
    <subcellularLocation>
        <location>Early endosome</location>
    </subcellularLocation>
    <subcellularLocation>
        <location>Recycling endosome</location>
    </subcellularLocation>
    <subcellularLocation>
        <location>Membrane</location>
        <topology>Multi-pass membrane protein</topology>
    </subcellularLocation>
    <text>Predominantly localizes to endocytic vesicles, and upon stimulation by the ligand is internalized via caveolae. Once internalized, the ligand dissociates from the receptor, and is targeted to degradation while the receptor is recycled back to the cell membrane.</text>
</comment>
<comment type="alternative products">
    <event type="alternative splicing"/>
    <isoform>
        <id>Q16570-1</id>
        <name>2</name>
        <sequence type="displayed"/>
    </isoform>
    <isoform>
        <id>Q16570-2</id>
        <name>1</name>
        <sequence type="described" ref="VSP_001323"/>
    </isoform>
</comment>
<comment type="tissue specificity">
    <text>Found in adult kidney, adult spleen, bone marrow and fetal liver. In particular, it is expressed along postcapillary venules throughout the body, except in the adult liver. Erythroid cells and postcapillary venule endothelium are the principle tissues expressing duffy. Fy(-A-B) individuals do not express duffy in the bone marrow, however they do, in postcapillary venule endothelium.</text>
</comment>
<comment type="PTM">
    <text evidence="5">Sulfation at Tyr-41 facilitates interaction with MGSA/CXCL1, RANTES/CCL5 and MCP-1/CCL2 but not IL8/CXCL8 (PubMed:15720550). Sulfation at Tyr-30 facilitates interaction with IL8/CXCL8 (PubMed:15720550).</text>
</comment>
<comment type="PTM">
    <text evidence="5 10">(Microbial infection) Sulfation at Tyr-41 facilitates interaction with Plasmodium vivax Duffy receptor (PVDR) (PubMed:15720550). Sulfation at Tyr-30/Tyr-41 and Tyr-41 alone increases binding affinity of Plasmodium vivax parasites and likely promotes invasion of red blood cells (PubMed:37336887).</text>
</comment>
<comment type="PTM">
    <text evidence="5 10">(Microbial infection) Sulfation at Tyr-41 facilitates interaction with Plasmodium knowlesi Duffy receptor alpha form (DBPalpha) (PubMed:15720550). Sulfation at Tyr-30/Tyr-41 and Tyr-41 alone increases binding affinity of Plasmodium knowlesi parasites and likely promotes invasion of red blood cells (PubMed:37336887).</text>
</comment>
<comment type="polymorphism">
    <text>DARC is responsible for the Duffy blood group system (FY) [MIM:110700]. The molecular basis of the Fy(A)=Fy1/Fy(B)=Fy2 blood group antigens is a single variation in position 42; Gly-42 corresponds to Fy(A) and Asp-42 to Fy(B). Individuals that do not produce the Duffy antigen (FY(A-B-)) are more resistant to infection by the malarial parasite Plasmodium vivax. This allele is found predominantly in population of African origin [MIM:611162].</text>
</comment>
<comment type="polymorphism">
    <text>Genetic variations in DARC define the white blood cell count quantitative trait locus 1 (WBCQ1) [MIM:611862]. Peripheral white blood cell count (WBC) is a common clinical measurement, used to determine evidence of acute inflammation or infection. Peripheral WBC is the sum of several cell types including neutrophils and lymphocytes, which are the most common types of WBC, as well as less common cell types such as eosinophils, basophils, and monocytes. Elevated WBC has been associated with risk of coronary heart disease, cancer, and all-cause mortality. White blood cell levels have widespread clinical applications including assessment of patients undergoing chemotherapy and evaluation of infection.</text>
</comment>
<comment type="miscellaneous">
    <text evidence="11">A subset of erythroblasts from genotypically Duffy-negative individuals transiently expresses ACKR1 during terminal erythroid differentiation and P.vivax merozoites can invade these ACKR1-expressing Duffy-negative erythroblasts.</text>
</comment>
<comment type="similarity">
    <text evidence="29">Belongs to the G-protein coupled receptor 1 family. Atypical chemokine receptor subfamily.</text>
</comment>
<comment type="online information" name="Wikipedia">
    <link uri="https://en.wikipedia.org/wiki/Duffy_antigen"/>
    <text>Duffy antigen entry</text>
</comment>
<sequence length="336" mass="35553">MGNCLHRAELSPSTENSSQLDFEDVWNSSYGVNDSFPDGDYGANLEAAAPCHSCNLLDDSALPFFILTSVLGILASSTVLFMLFRPLFRWQLCPGWPVLAQLAVGSALFSIVVPVLAPGLGSTRSSALCSLGYCVWYGSAFAQALLLGCHASLGHRLGAGQVPGLTLGLTVGIWGVAALLTLPVTLASGASGGLCTLIYSTELKALQATHTVACLAIFVLLPLGLFGAKGLKKALGMGPGPWMNILWAWFIFWWPHGVVLGLDFLVRSKLLLLSTCLAQQALDLLLNLAEALAILHCVATPLLLALFCHQATRTLLPSLPLPEGWSSHLDTLGSKS</sequence>